<evidence type="ECO:0000250" key="1"/>
<evidence type="ECO:0000250" key="2">
    <source>
        <dbReference type="UniProtKB" id="P0AB89"/>
    </source>
</evidence>
<evidence type="ECO:0000305" key="3"/>
<proteinExistence type="inferred from homology"/>
<name>PUR8_METJA</name>
<protein>
    <recommendedName>
        <fullName>Adenylosuccinate lyase</fullName>
        <shortName>ASL</shortName>
        <ecNumber evidence="2">4.3.2.2</ecNumber>
    </recommendedName>
    <alternativeName>
        <fullName>Adenylosuccinase</fullName>
        <shortName>ASase</shortName>
    </alternativeName>
</protein>
<organism>
    <name type="scientific">Methanocaldococcus jannaschii (strain ATCC 43067 / DSM 2661 / JAL-1 / JCM 10045 / NBRC 100440)</name>
    <name type="common">Methanococcus jannaschii</name>
    <dbReference type="NCBI Taxonomy" id="243232"/>
    <lineage>
        <taxon>Archaea</taxon>
        <taxon>Methanobacteriati</taxon>
        <taxon>Methanobacteriota</taxon>
        <taxon>Methanomada group</taxon>
        <taxon>Methanococci</taxon>
        <taxon>Methanococcales</taxon>
        <taxon>Methanocaldococcaceae</taxon>
        <taxon>Methanocaldococcus</taxon>
    </lineage>
</organism>
<feature type="chain" id="PRO_0000137888" description="Adenylosuccinate lyase">
    <location>
        <begin position="1"/>
        <end position="462"/>
    </location>
</feature>
<feature type="active site" description="Proton donor/acceptor" evidence="2">
    <location>
        <position position="162"/>
    </location>
</feature>
<feature type="active site" description="Proton donor/acceptor" evidence="2">
    <location>
        <position position="287"/>
    </location>
</feature>
<feature type="binding site" evidence="2">
    <location>
        <begin position="21"/>
        <end position="22"/>
    </location>
    <ligand>
        <name>N(6)-(1,2-dicarboxyethyl)-AMP</name>
        <dbReference type="ChEBI" id="CHEBI:57567"/>
    </ligand>
</feature>
<feature type="binding site" evidence="2">
    <location>
        <begin position="87"/>
        <end position="89"/>
    </location>
    <ligand>
        <name>N(6)-(1,2-dicarboxyethyl)-AMP</name>
        <dbReference type="ChEBI" id="CHEBI:57567"/>
    </ligand>
</feature>
<feature type="binding site" evidence="2">
    <location>
        <begin position="114"/>
        <end position="115"/>
    </location>
    <ligand>
        <name>N(6)-(1,2-dicarboxyethyl)-AMP</name>
        <dbReference type="ChEBI" id="CHEBI:57567"/>
    </ligand>
</feature>
<feature type="binding site" evidence="2">
    <location>
        <position position="236"/>
    </location>
    <ligand>
        <name>N(6)-(1,2-dicarboxyethyl)-AMP</name>
        <dbReference type="ChEBI" id="CHEBI:57567"/>
    </ligand>
</feature>
<feature type="binding site" evidence="2">
    <location>
        <position position="288"/>
    </location>
    <ligand>
        <name>N(6)-(1,2-dicarboxyethyl)-AMP</name>
        <dbReference type="ChEBI" id="CHEBI:57567"/>
    </ligand>
</feature>
<feature type="binding site" evidence="2">
    <location>
        <begin position="293"/>
        <end position="295"/>
    </location>
    <ligand>
        <name>N(6)-(1,2-dicarboxyethyl)-AMP</name>
        <dbReference type="ChEBI" id="CHEBI:57567"/>
    </ligand>
</feature>
<feature type="binding site" evidence="2">
    <location>
        <begin position="332"/>
        <end position="336"/>
    </location>
    <ligand>
        <name>N(6)-(1,2-dicarboxyethyl)-AMP</name>
        <dbReference type="ChEBI" id="CHEBI:57567"/>
    </ligand>
</feature>
<dbReference type="EC" id="4.3.2.2" evidence="2"/>
<dbReference type="EMBL" id="L77117">
    <property type="protein sequence ID" value="AAB98931.1"/>
    <property type="molecule type" value="Genomic_DNA"/>
</dbReference>
<dbReference type="PIR" id="A64416">
    <property type="entry name" value="A64416"/>
</dbReference>
<dbReference type="SMR" id="Q58339"/>
<dbReference type="FunCoup" id="Q58339">
    <property type="interactions" value="301"/>
</dbReference>
<dbReference type="STRING" id="243232.MJ_0929"/>
<dbReference type="PaxDb" id="243232-MJ_0929"/>
<dbReference type="EnsemblBacteria" id="AAB98931">
    <property type="protein sequence ID" value="AAB98931"/>
    <property type="gene ID" value="MJ_0929"/>
</dbReference>
<dbReference type="KEGG" id="mja:MJ_0929"/>
<dbReference type="eggNOG" id="arCOG01747">
    <property type="taxonomic scope" value="Archaea"/>
</dbReference>
<dbReference type="HOGENOM" id="CLU_030949_0_1_2"/>
<dbReference type="InParanoid" id="Q58339"/>
<dbReference type="PhylomeDB" id="Q58339"/>
<dbReference type="BioCyc" id="MetaCyc:MONOMER-18798"/>
<dbReference type="UniPathway" id="UPA00074">
    <property type="reaction ID" value="UER00132"/>
</dbReference>
<dbReference type="UniPathway" id="UPA00075">
    <property type="reaction ID" value="UER00336"/>
</dbReference>
<dbReference type="Proteomes" id="UP000000805">
    <property type="component" value="Chromosome"/>
</dbReference>
<dbReference type="GO" id="GO:0005829">
    <property type="term" value="C:cytosol"/>
    <property type="evidence" value="ECO:0000318"/>
    <property type="project" value="GO_Central"/>
</dbReference>
<dbReference type="GO" id="GO:0070626">
    <property type="term" value="F:(S)-2-(5-amino-1-(5-phospho-D-ribosyl)imidazole-4-carboxamido) succinate lyase (fumarate-forming) activity"/>
    <property type="evidence" value="ECO:0000318"/>
    <property type="project" value="GO_Central"/>
</dbReference>
<dbReference type="GO" id="GO:0004018">
    <property type="term" value="F:N6-(1,2-dicarboxyethyl)AMP AMP-lyase (fumarate-forming) activity"/>
    <property type="evidence" value="ECO:0000318"/>
    <property type="project" value="GO_Central"/>
</dbReference>
<dbReference type="GO" id="GO:0044208">
    <property type="term" value="P:'de novo' AMP biosynthetic process"/>
    <property type="evidence" value="ECO:0000318"/>
    <property type="project" value="GO_Central"/>
</dbReference>
<dbReference type="GO" id="GO:0006189">
    <property type="term" value="P:'de novo' IMP biosynthetic process"/>
    <property type="evidence" value="ECO:0007669"/>
    <property type="project" value="UniProtKB-UniPathway"/>
</dbReference>
<dbReference type="CDD" id="cd01360">
    <property type="entry name" value="Adenylsuccinate_lyase_1"/>
    <property type="match status" value="1"/>
</dbReference>
<dbReference type="FunFam" id="1.20.200.10:FF:000014">
    <property type="entry name" value="3-carboxy-cis,cis-muconate cycloisomerase"/>
    <property type="match status" value="1"/>
</dbReference>
<dbReference type="FunFam" id="1.10.275.10:FF:000012">
    <property type="entry name" value="Adenylosuccinate lyase"/>
    <property type="match status" value="1"/>
</dbReference>
<dbReference type="FunFam" id="1.10.40.30:FF:000007">
    <property type="entry name" value="Adenylosuccinate lyase"/>
    <property type="match status" value="1"/>
</dbReference>
<dbReference type="Gene3D" id="1.10.40.30">
    <property type="entry name" value="Fumarase/aspartase (C-terminal domain)"/>
    <property type="match status" value="1"/>
</dbReference>
<dbReference type="Gene3D" id="1.20.200.10">
    <property type="entry name" value="Fumarase/aspartase (Central domain)"/>
    <property type="match status" value="1"/>
</dbReference>
<dbReference type="Gene3D" id="1.10.275.10">
    <property type="entry name" value="Fumarase/aspartase (N-terminal domain)"/>
    <property type="match status" value="1"/>
</dbReference>
<dbReference type="InterPro" id="IPR019468">
    <property type="entry name" value="AdenyloSucc_lyase_C"/>
</dbReference>
<dbReference type="InterPro" id="IPR024083">
    <property type="entry name" value="Fumarase/histidase_N"/>
</dbReference>
<dbReference type="InterPro" id="IPR020557">
    <property type="entry name" value="Fumarate_lyase_CS"/>
</dbReference>
<dbReference type="InterPro" id="IPR000362">
    <property type="entry name" value="Fumarate_lyase_fam"/>
</dbReference>
<dbReference type="InterPro" id="IPR022761">
    <property type="entry name" value="Fumarate_lyase_N"/>
</dbReference>
<dbReference type="InterPro" id="IPR008948">
    <property type="entry name" value="L-Aspartase-like"/>
</dbReference>
<dbReference type="InterPro" id="IPR004769">
    <property type="entry name" value="Pur_lyase"/>
</dbReference>
<dbReference type="NCBIfam" id="TIGR00928">
    <property type="entry name" value="purB"/>
    <property type="match status" value="1"/>
</dbReference>
<dbReference type="PANTHER" id="PTHR43172">
    <property type="entry name" value="ADENYLOSUCCINATE LYASE"/>
    <property type="match status" value="1"/>
</dbReference>
<dbReference type="PANTHER" id="PTHR43172:SF1">
    <property type="entry name" value="ADENYLOSUCCINATE LYASE"/>
    <property type="match status" value="1"/>
</dbReference>
<dbReference type="Pfam" id="PF10397">
    <property type="entry name" value="ADSL_C"/>
    <property type="match status" value="1"/>
</dbReference>
<dbReference type="Pfam" id="PF00206">
    <property type="entry name" value="Lyase_1"/>
    <property type="match status" value="1"/>
</dbReference>
<dbReference type="PRINTS" id="PR00145">
    <property type="entry name" value="ARGSUCLYASE"/>
</dbReference>
<dbReference type="PRINTS" id="PR00149">
    <property type="entry name" value="FUMRATELYASE"/>
</dbReference>
<dbReference type="SMART" id="SM00998">
    <property type="entry name" value="ADSL_C"/>
    <property type="match status" value="1"/>
</dbReference>
<dbReference type="SUPFAM" id="SSF48557">
    <property type="entry name" value="L-aspartase-like"/>
    <property type="match status" value="1"/>
</dbReference>
<dbReference type="PROSITE" id="PS00163">
    <property type="entry name" value="FUMARATE_LYASES"/>
    <property type="match status" value="1"/>
</dbReference>
<reference key="1">
    <citation type="journal article" date="1996" name="Science">
        <title>Complete genome sequence of the methanogenic archaeon, Methanococcus jannaschii.</title>
        <authorList>
            <person name="Bult C.J."/>
            <person name="White O."/>
            <person name="Olsen G.J."/>
            <person name="Zhou L."/>
            <person name="Fleischmann R.D."/>
            <person name="Sutton G.G."/>
            <person name="Blake J.A."/>
            <person name="FitzGerald L.M."/>
            <person name="Clayton R.A."/>
            <person name="Gocayne J.D."/>
            <person name="Kerlavage A.R."/>
            <person name="Dougherty B.A."/>
            <person name="Tomb J.-F."/>
            <person name="Adams M.D."/>
            <person name="Reich C.I."/>
            <person name="Overbeek R."/>
            <person name="Kirkness E.F."/>
            <person name="Weinstock K.G."/>
            <person name="Merrick J.M."/>
            <person name="Glodek A."/>
            <person name="Scott J.L."/>
            <person name="Geoghagen N.S.M."/>
            <person name="Weidman J.F."/>
            <person name="Fuhrmann J.L."/>
            <person name="Nguyen D."/>
            <person name="Utterback T.R."/>
            <person name="Kelley J.M."/>
            <person name="Peterson J.D."/>
            <person name="Sadow P.W."/>
            <person name="Hanna M.C."/>
            <person name="Cotton M.D."/>
            <person name="Roberts K.M."/>
            <person name="Hurst M.A."/>
            <person name="Kaine B.P."/>
            <person name="Borodovsky M."/>
            <person name="Klenk H.-P."/>
            <person name="Fraser C.M."/>
            <person name="Smith H.O."/>
            <person name="Woese C.R."/>
            <person name="Venter J.C."/>
        </authorList>
    </citation>
    <scope>NUCLEOTIDE SEQUENCE [LARGE SCALE GENOMIC DNA]</scope>
    <source>
        <strain>ATCC 43067 / DSM 2661 / JAL-1 / JCM 10045 / NBRC 100440</strain>
    </source>
</reference>
<accession>Q58339</accession>
<sequence length="462" mass="52592">MELNQIIKSGEKMAVHPIDYRYGTPEMRKVWEEENKLEKMLKVEAALAKAQAELGLIPKEAAEEINKKASTKYVKLERVKEIEKQTKHDVVAMIRALAEVCEGNAGEYIHFGATSNDIVDTANSLLIKESIEIIEDKLKQLRDILLDKAEEHKYTVCVGRTHGQHAIPTTYGMRFALWAAEIDRHLERLKEAKKRICVSMITGAVGTMAAMGEKGLEVHKRVAEILGLEPVLISNQVIQRDRHAEFVFLLALIAQTLNKIGVTVRSMQRTEIGELEEEFDPTKQTGSSTMPHKRNPITFEQICGLSRVIKSLCIAEMDNIPLWEERDLTNSSAERCIFAEVCVLTDHILTLAIKGVKKLKVNKENVERNLELTKGLIMAERIMIELAKRGMGRQTAHEIVRQCAMKAYEEKRHLKDILLENEEVMKYITKEELEELMNPKTYIGLAPQIVDEVIKTLKNKKY</sequence>
<comment type="function">
    <text evidence="2">Catalyzes two reactions in de novo purine nucleotide biosynthesis. Catalyzes the breakdown of 5-aminoimidazole- (N-succinylocarboxamide) ribotide (SAICAR or 2-[5-amino-1-(5-phospho-beta-D-ribosyl)imidazole-4-carboxamido]succinate) to 5-aminoimidazole-4-carboxamide ribotide (AICAR or 5-amino-1-(5-phospho-beta-D-ribosyl)imidazole-4-carboxamide) and fumarate, and of adenylosuccinate (ADS or N(6)-(1,2-dicarboxyethyl)-AMP) to adenosine monophosphate (AMP) and fumarate.</text>
</comment>
<comment type="catalytic activity">
    <reaction evidence="2">
        <text>N(6)-(1,2-dicarboxyethyl)-AMP = fumarate + AMP</text>
        <dbReference type="Rhea" id="RHEA:16853"/>
        <dbReference type="ChEBI" id="CHEBI:29806"/>
        <dbReference type="ChEBI" id="CHEBI:57567"/>
        <dbReference type="ChEBI" id="CHEBI:456215"/>
        <dbReference type="EC" id="4.3.2.2"/>
    </reaction>
    <physiologicalReaction direction="left-to-right" evidence="2">
        <dbReference type="Rhea" id="RHEA:16854"/>
    </physiologicalReaction>
</comment>
<comment type="catalytic activity">
    <reaction evidence="2">
        <text>(2S)-2-[5-amino-1-(5-phospho-beta-D-ribosyl)imidazole-4-carboxamido]succinate = 5-amino-1-(5-phospho-beta-D-ribosyl)imidazole-4-carboxamide + fumarate</text>
        <dbReference type="Rhea" id="RHEA:23920"/>
        <dbReference type="ChEBI" id="CHEBI:29806"/>
        <dbReference type="ChEBI" id="CHEBI:58443"/>
        <dbReference type="ChEBI" id="CHEBI:58475"/>
        <dbReference type="EC" id="4.3.2.2"/>
    </reaction>
    <physiologicalReaction direction="left-to-right" evidence="2">
        <dbReference type="Rhea" id="RHEA:23921"/>
    </physiologicalReaction>
</comment>
<comment type="pathway">
    <text>Purine metabolism; AMP biosynthesis via de novo pathway; AMP from IMP: step 2/2.</text>
</comment>
<comment type="pathway">
    <text>Purine metabolism; IMP biosynthesis via de novo pathway; 5-amino-1-(5-phospho-D-ribosyl)imidazole-4-carboxamide from 5-amino-1-(5-phospho-D-ribosyl)imidazole-4-carboxylate: step 2/2.</text>
</comment>
<comment type="subunit">
    <text evidence="1">Homotetramer. Residues from neighboring subunits contribute catalytic and substrate-binding residues to each active site (By similarity).</text>
</comment>
<comment type="similarity">
    <text evidence="3">Belongs to the lyase 1 family. Adenylosuccinate lyase subfamily.</text>
</comment>
<gene>
    <name type="primary">purB</name>
    <name type="ordered locus">MJ0929</name>
</gene>
<keyword id="KW-0456">Lyase</keyword>
<keyword id="KW-0658">Purine biosynthesis</keyword>
<keyword id="KW-1185">Reference proteome</keyword>